<sequence length="192" mass="21339">MKGLRKLLLVLGVMLLATGVALAAGGEAASGEHHYDWTNLGFRLANFAIFIAIIYYAAGKKLIAFFGGRRKGIEQELNDLETRKTDAKKQLGDVEKRIADLENERKAIIAEYQAQGEALKAAIISKAETSARQIVEQAKKSAENEVKYAKDAMREELADMIVDATEKLLKERLDGKEQEKLIDKYLTKVVLN</sequence>
<protein>
    <recommendedName>
        <fullName evidence="1">ATP synthase subunit b</fullName>
    </recommendedName>
    <alternativeName>
        <fullName evidence="1">ATP synthase F(0) sector subunit b</fullName>
    </alternativeName>
    <alternativeName>
        <fullName evidence="1">ATPase subunit I</fullName>
    </alternativeName>
    <alternativeName>
        <fullName evidence="1">F-type ATPase subunit b</fullName>
        <shortName evidence="1">F-ATPase subunit b</shortName>
    </alternativeName>
</protein>
<reference key="1">
    <citation type="journal article" date="2011" name="J. Bacteriol.">
        <title>Complete genome sequence and updated annotation of Desulfovibrio alaskensis G20.</title>
        <authorList>
            <person name="Hauser L.J."/>
            <person name="Land M.L."/>
            <person name="Brown S.D."/>
            <person name="Larimer F."/>
            <person name="Keller K.L."/>
            <person name="Rapp-Giles B.J."/>
            <person name="Price M.N."/>
            <person name="Lin M."/>
            <person name="Bruce D.C."/>
            <person name="Detter J.C."/>
            <person name="Tapia R."/>
            <person name="Han C.S."/>
            <person name="Goodwin L.A."/>
            <person name="Cheng J.F."/>
            <person name="Pitluck S."/>
            <person name="Copeland A."/>
            <person name="Lucas S."/>
            <person name="Nolan M."/>
            <person name="Lapidus A.L."/>
            <person name="Palumbo A.V."/>
            <person name="Wall J.D."/>
        </authorList>
    </citation>
    <scope>NUCLEOTIDE SEQUENCE [LARGE SCALE GENOMIC DNA]</scope>
    <source>
        <strain>ATCC BAA-1058 / DSM 17464 / G20</strain>
    </source>
</reference>
<gene>
    <name evidence="1" type="primary">atpF</name>
    <name type="ordered locus">Dde_0989</name>
</gene>
<keyword id="KW-0066">ATP synthesis</keyword>
<keyword id="KW-0997">Cell inner membrane</keyword>
<keyword id="KW-1003">Cell membrane</keyword>
<keyword id="KW-0138">CF(0)</keyword>
<keyword id="KW-0375">Hydrogen ion transport</keyword>
<keyword id="KW-0406">Ion transport</keyword>
<keyword id="KW-0472">Membrane</keyword>
<keyword id="KW-1185">Reference proteome</keyword>
<keyword id="KW-0812">Transmembrane</keyword>
<keyword id="KW-1133">Transmembrane helix</keyword>
<keyword id="KW-0813">Transport</keyword>
<proteinExistence type="inferred from homology"/>
<name>ATPF_OLEA2</name>
<evidence type="ECO:0000255" key="1">
    <source>
        <dbReference type="HAMAP-Rule" id="MF_01398"/>
    </source>
</evidence>
<organism>
    <name type="scientific">Oleidesulfovibrio alaskensis (strain ATCC BAA-1058 / DSM 17464 / G20)</name>
    <name type="common">Desulfovibrio alaskensis</name>
    <dbReference type="NCBI Taxonomy" id="207559"/>
    <lineage>
        <taxon>Bacteria</taxon>
        <taxon>Pseudomonadati</taxon>
        <taxon>Thermodesulfobacteriota</taxon>
        <taxon>Desulfovibrionia</taxon>
        <taxon>Desulfovibrionales</taxon>
        <taxon>Desulfovibrionaceae</taxon>
        <taxon>Oleidesulfovibrio</taxon>
    </lineage>
</organism>
<feature type="chain" id="PRO_5000102791" description="ATP synthase subunit b">
    <location>
        <begin position="1"/>
        <end position="192"/>
    </location>
</feature>
<feature type="transmembrane region" description="Helical" evidence="1">
    <location>
        <begin position="7"/>
        <end position="27"/>
    </location>
</feature>
<accession>Q313V6</accession>
<dbReference type="EMBL" id="CP000112">
    <property type="protein sequence ID" value="ABB37790.1"/>
    <property type="molecule type" value="Genomic_DNA"/>
</dbReference>
<dbReference type="RefSeq" id="WP_011367031.1">
    <property type="nucleotide sequence ID" value="NC_007519.1"/>
</dbReference>
<dbReference type="SMR" id="Q313V6"/>
<dbReference type="STRING" id="207559.Dde_0989"/>
<dbReference type="KEGG" id="dde:Dde_0989"/>
<dbReference type="eggNOG" id="COG0711">
    <property type="taxonomic scope" value="Bacteria"/>
</dbReference>
<dbReference type="HOGENOM" id="CLU_079215_3_1_7"/>
<dbReference type="Proteomes" id="UP000002710">
    <property type="component" value="Chromosome"/>
</dbReference>
<dbReference type="GO" id="GO:0005886">
    <property type="term" value="C:plasma membrane"/>
    <property type="evidence" value="ECO:0007669"/>
    <property type="project" value="UniProtKB-SubCell"/>
</dbReference>
<dbReference type="GO" id="GO:0045259">
    <property type="term" value="C:proton-transporting ATP synthase complex"/>
    <property type="evidence" value="ECO:0007669"/>
    <property type="project" value="UniProtKB-KW"/>
</dbReference>
<dbReference type="GO" id="GO:0046933">
    <property type="term" value="F:proton-transporting ATP synthase activity, rotational mechanism"/>
    <property type="evidence" value="ECO:0007669"/>
    <property type="project" value="UniProtKB-UniRule"/>
</dbReference>
<dbReference type="GO" id="GO:0046961">
    <property type="term" value="F:proton-transporting ATPase activity, rotational mechanism"/>
    <property type="evidence" value="ECO:0007669"/>
    <property type="project" value="TreeGrafter"/>
</dbReference>
<dbReference type="CDD" id="cd06503">
    <property type="entry name" value="ATP-synt_Fo_b"/>
    <property type="match status" value="1"/>
</dbReference>
<dbReference type="HAMAP" id="MF_01398">
    <property type="entry name" value="ATP_synth_b_bprime"/>
    <property type="match status" value="1"/>
</dbReference>
<dbReference type="InterPro" id="IPR002146">
    <property type="entry name" value="ATP_synth_b/b'su_bac/chlpt"/>
</dbReference>
<dbReference type="InterPro" id="IPR005864">
    <property type="entry name" value="ATP_synth_F0_bsu_bac"/>
</dbReference>
<dbReference type="InterPro" id="IPR050059">
    <property type="entry name" value="ATP_synthase_B_chain"/>
</dbReference>
<dbReference type="NCBIfam" id="TIGR01144">
    <property type="entry name" value="ATP_synt_b"/>
    <property type="match status" value="1"/>
</dbReference>
<dbReference type="PANTHER" id="PTHR33445:SF1">
    <property type="entry name" value="ATP SYNTHASE SUBUNIT B"/>
    <property type="match status" value="1"/>
</dbReference>
<dbReference type="PANTHER" id="PTHR33445">
    <property type="entry name" value="ATP SYNTHASE SUBUNIT B', CHLOROPLASTIC"/>
    <property type="match status" value="1"/>
</dbReference>
<dbReference type="Pfam" id="PF00430">
    <property type="entry name" value="ATP-synt_B"/>
    <property type="match status" value="1"/>
</dbReference>
<comment type="function">
    <text evidence="1">F(1)F(0) ATP synthase produces ATP from ADP in the presence of a proton or sodium gradient. F-type ATPases consist of two structural domains, F(1) containing the extramembraneous catalytic core and F(0) containing the membrane proton channel, linked together by a central stalk and a peripheral stalk. During catalysis, ATP synthesis in the catalytic domain of F(1) is coupled via a rotary mechanism of the central stalk subunits to proton translocation.</text>
</comment>
<comment type="function">
    <text evidence="1">Component of the F(0) channel, it forms part of the peripheral stalk, linking F(1) to F(0).</text>
</comment>
<comment type="subunit">
    <text evidence="1">F-type ATPases have 2 components, F(1) - the catalytic core - and F(0) - the membrane proton channel. F(1) has five subunits: alpha(3), beta(3), gamma(1), delta(1), epsilon(1). F(0) has three main subunits: a(1), b(2) and c(10-14). The alpha and beta chains form an alternating ring which encloses part of the gamma chain. F(1) is attached to F(0) by a central stalk formed by the gamma and epsilon chains, while a peripheral stalk is formed by the delta and b chains.</text>
</comment>
<comment type="subcellular location">
    <subcellularLocation>
        <location evidence="1">Cell inner membrane</location>
        <topology evidence="1">Single-pass membrane protein</topology>
    </subcellularLocation>
</comment>
<comment type="similarity">
    <text evidence="1">Belongs to the ATPase B chain family.</text>
</comment>